<gene>
    <name type="primary">saeR</name>
    <name type="ordered locus">SAUSA300_0691</name>
</gene>
<name>SAER_STAA3</name>
<sequence length="228" mass="26858">MTHLLIVDDEQDIVDICQTYFEYEGYKVTTTTSGKEAISLLSNDIDIMVLDIMMPEVNGYDIVKEMKRQKLDIPFIYLTAKTQEHDTIYALTLGADDYVKKPFSPRELVLRINNLLTRMKKYHHQPVEQLSFDELTLINLSKVVTVNGHEVPMRIKEFELLWYLASRENEVISKSELLEKVWGYDYYEDANTVNVHIHRIREKLEKESFTTYTITTVWGLGYKFERSR</sequence>
<keyword id="KW-0963">Cytoplasm</keyword>
<keyword id="KW-0238">DNA-binding</keyword>
<keyword id="KW-0597">Phosphoprotein</keyword>
<keyword id="KW-0716">Sensory transduction</keyword>
<keyword id="KW-0804">Transcription</keyword>
<keyword id="KW-0805">Transcription regulation</keyword>
<keyword id="KW-0902">Two-component regulatory system</keyword>
<keyword id="KW-0843">Virulence</keyword>
<feature type="chain" id="PRO_0000295926" description="Response regulator SaeR">
    <location>
        <begin position="1"/>
        <end position="228"/>
    </location>
</feature>
<feature type="domain" description="Response regulatory" evidence="2">
    <location>
        <begin position="3"/>
        <end position="116"/>
    </location>
</feature>
<feature type="DNA-binding region" description="OmpR/PhoB-type" evidence="3">
    <location>
        <begin position="127"/>
        <end position="226"/>
    </location>
</feature>
<feature type="modified residue" description="4-aspartylphosphate" evidence="2">
    <location>
        <position position="51"/>
    </location>
</feature>
<accession>Q2FIT4</accession>
<evidence type="ECO:0000250" key="1"/>
<evidence type="ECO:0000255" key="2">
    <source>
        <dbReference type="PROSITE-ProRule" id="PRU00169"/>
    </source>
</evidence>
<evidence type="ECO:0000255" key="3">
    <source>
        <dbReference type="PROSITE-ProRule" id="PRU01091"/>
    </source>
</evidence>
<organism>
    <name type="scientific">Staphylococcus aureus (strain USA300)</name>
    <dbReference type="NCBI Taxonomy" id="367830"/>
    <lineage>
        <taxon>Bacteria</taxon>
        <taxon>Bacillati</taxon>
        <taxon>Bacillota</taxon>
        <taxon>Bacilli</taxon>
        <taxon>Bacillales</taxon>
        <taxon>Staphylococcaceae</taxon>
        <taxon>Staphylococcus</taxon>
    </lineage>
</organism>
<proteinExistence type="inferred from homology"/>
<reference key="1">
    <citation type="journal article" date="2006" name="Lancet">
        <title>Complete genome sequence of USA300, an epidemic clone of community-acquired meticillin-resistant Staphylococcus aureus.</title>
        <authorList>
            <person name="Diep B.A."/>
            <person name="Gill S.R."/>
            <person name="Chang R.F."/>
            <person name="Phan T.H."/>
            <person name="Chen J.H."/>
            <person name="Davidson M.G."/>
            <person name="Lin F."/>
            <person name="Lin J."/>
            <person name="Carleton H.A."/>
            <person name="Mongodin E.F."/>
            <person name="Sensabaugh G.F."/>
            <person name="Perdreau-Remington F."/>
        </authorList>
    </citation>
    <scope>NUCLEOTIDE SEQUENCE [LARGE SCALE GENOMIC DNA]</scope>
    <source>
        <strain>USA300</strain>
    </source>
</reference>
<comment type="function">
    <text evidence="1">Member of the two-component regulatory system SaeR/SaeS involved in the regulation of staphylococcal virulence factors in a strain-dependent fashion. Probably functions as a transcriptional regulator via a specific DNA-binding domain, recognizing motifs near the promoter sequences of target genes (By similarity).</text>
</comment>
<comment type="subcellular location">
    <subcellularLocation>
        <location evidence="1">Cytoplasm</location>
    </subcellularLocation>
</comment>
<comment type="PTM">
    <text evidence="1">Phosphorylated by SaeS.</text>
</comment>
<protein>
    <recommendedName>
        <fullName>Response regulator SaeR</fullName>
    </recommendedName>
    <alternativeName>
        <fullName>Staphylococcus exoprotein expression protein R</fullName>
    </alternativeName>
</protein>
<dbReference type="EMBL" id="CP000255">
    <property type="protein sequence ID" value="ABD22784.1"/>
    <property type="molecule type" value="Genomic_DNA"/>
</dbReference>
<dbReference type="RefSeq" id="WP_000149344.1">
    <property type="nucleotide sequence ID" value="NZ_CP027476.1"/>
</dbReference>
<dbReference type="SMR" id="Q2FIT4"/>
<dbReference type="KEGG" id="saa:SAUSA300_0691"/>
<dbReference type="HOGENOM" id="CLU_000445_30_4_9"/>
<dbReference type="OMA" id="LMREVWD"/>
<dbReference type="Proteomes" id="UP000001939">
    <property type="component" value="Chromosome"/>
</dbReference>
<dbReference type="GO" id="GO:0005829">
    <property type="term" value="C:cytosol"/>
    <property type="evidence" value="ECO:0007669"/>
    <property type="project" value="TreeGrafter"/>
</dbReference>
<dbReference type="GO" id="GO:0032993">
    <property type="term" value="C:protein-DNA complex"/>
    <property type="evidence" value="ECO:0007669"/>
    <property type="project" value="TreeGrafter"/>
</dbReference>
<dbReference type="GO" id="GO:0000156">
    <property type="term" value="F:phosphorelay response regulator activity"/>
    <property type="evidence" value="ECO:0007669"/>
    <property type="project" value="TreeGrafter"/>
</dbReference>
<dbReference type="GO" id="GO:0000976">
    <property type="term" value="F:transcription cis-regulatory region binding"/>
    <property type="evidence" value="ECO:0007669"/>
    <property type="project" value="TreeGrafter"/>
</dbReference>
<dbReference type="GO" id="GO:0006355">
    <property type="term" value="P:regulation of DNA-templated transcription"/>
    <property type="evidence" value="ECO:0007669"/>
    <property type="project" value="InterPro"/>
</dbReference>
<dbReference type="CDD" id="cd17574">
    <property type="entry name" value="REC_OmpR"/>
    <property type="match status" value="1"/>
</dbReference>
<dbReference type="CDD" id="cd00383">
    <property type="entry name" value="trans_reg_C"/>
    <property type="match status" value="1"/>
</dbReference>
<dbReference type="FunFam" id="1.10.10.10:FF:000018">
    <property type="entry name" value="DNA-binding response regulator ResD"/>
    <property type="match status" value="1"/>
</dbReference>
<dbReference type="Gene3D" id="3.40.50.2300">
    <property type="match status" value="1"/>
</dbReference>
<dbReference type="Gene3D" id="6.10.250.690">
    <property type="match status" value="1"/>
</dbReference>
<dbReference type="Gene3D" id="1.10.10.10">
    <property type="entry name" value="Winged helix-like DNA-binding domain superfamily/Winged helix DNA-binding domain"/>
    <property type="match status" value="1"/>
</dbReference>
<dbReference type="InterPro" id="IPR011006">
    <property type="entry name" value="CheY-like_superfamily"/>
</dbReference>
<dbReference type="InterPro" id="IPR001867">
    <property type="entry name" value="OmpR/PhoB-type_DNA-bd"/>
</dbReference>
<dbReference type="InterPro" id="IPR001789">
    <property type="entry name" value="Sig_transdc_resp-reg_receiver"/>
</dbReference>
<dbReference type="InterPro" id="IPR039420">
    <property type="entry name" value="WalR-like"/>
</dbReference>
<dbReference type="InterPro" id="IPR036388">
    <property type="entry name" value="WH-like_DNA-bd_sf"/>
</dbReference>
<dbReference type="PANTHER" id="PTHR48111">
    <property type="entry name" value="REGULATOR OF RPOS"/>
    <property type="match status" value="1"/>
</dbReference>
<dbReference type="PANTHER" id="PTHR48111:SF2">
    <property type="entry name" value="RESPONSE REGULATOR SAER"/>
    <property type="match status" value="1"/>
</dbReference>
<dbReference type="Pfam" id="PF00072">
    <property type="entry name" value="Response_reg"/>
    <property type="match status" value="1"/>
</dbReference>
<dbReference type="Pfam" id="PF00486">
    <property type="entry name" value="Trans_reg_C"/>
    <property type="match status" value="1"/>
</dbReference>
<dbReference type="SMART" id="SM00448">
    <property type="entry name" value="REC"/>
    <property type="match status" value="1"/>
</dbReference>
<dbReference type="SMART" id="SM00862">
    <property type="entry name" value="Trans_reg_C"/>
    <property type="match status" value="1"/>
</dbReference>
<dbReference type="SUPFAM" id="SSF52172">
    <property type="entry name" value="CheY-like"/>
    <property type="match status" value="1"/>
</dbReference>
<dbReference type="PROSITE" id="PS51755">
    <property type="entry name" value="OMPR_PHOB"/>
    <property type="match status" value="1"/>
</dbReference>
<dbReference type="PROSITE" id="PS50110">
    <property type="entry name" value="RESPONSE_REGULATORY"/>
    <property type="match status" value="1"/>
</dbReference>